<gene>
    <name evidence="6" type="primary">DIS1</name>
    <name evidence="10" type="ordered locus">Os03g0356414</name>
    <name evidence="9" type="ordered locus">LOC_Os03g24040</name>
</gene>
<proteinExistence type="evidence at protein level"/>
<keyword id="KW-0963">Cytoplasm</keyword>
<keyword id="KW-0479">Metal-binding</keyword>
<keyword id="KW-0539">Nucleus</keyword>
<keyword id="KW-1185">Reference proteome</keyword>
<keyword id="KW-0346">Stress response</keyword>
<keyword id="KW-0808">Transferase</keyword>
<keyword id="KW-0833">Ubl conjugation pathway</keyword>
<keyword id="KW-0862">Zinc</keyword>
<keyword id="KW-0863">Zinc-finger</keyword>
<accession>Q10L91</accession>
<feature type="chain" id="PRO_0000442185" description="E3 ubiquitin-protein ligase DIS1">
    <location>
        <begin position="1"/>
        <end position="301"/>
    </location>
</feature>
<feature type="zinc finger region" description="RING-type; degenerate" evidence="2">
    <location>
        <begin position="53"/>
        <end position="89"/>
    </location>
</feature>
<feature type="zinc finger region" description="SIAH-type; degenerate" evidence="3">
    <location>
        <begin position="106"/>
        <end position="166"/>
    </location>
</feature>
<feature type="mutagenesis site" description="Loss of E3 ligase activity." evidence="4">
    <original>H</original>
    <variation>Y</variation>
    <location>
        <position position="71"/>
    </location>
</feature>
<organism>
    <name type="scientific">Oryza sativa subsp. japonica</name>
    <name type="common">Rice</name>
    <dbReference type="NCBI Taxonomy" id="39947"/>
    <lineage>
        <taxon>Eukaryota</taxon>
        <taxon>Viridiplantae</taxon>
        <taxon>Streptophyta</taxon>
        <taxon>Embryophyta</taxon>
        <taxon>Tracheophyta</taxon>
        <taxon>Spermatophyta</taxon>
        <taxon>Magnoliopsida</taxon>
        <taxon>Liliopsida</taxon>
        <taxon>Poales</taxon>
        <taxon>Poaceae</taxon>
        <taxon>BOP clade</taxon>
        <taxon>Oryzoideae</taxon>
        <taxon>Oryzeae</taxon>
        <taxon>Oryzinae</taxon>
        <taxon>Oryza</taxon>
        <taxon>Oryza sativa</taxon>
    </lineage>
</organism>
<name>DIS1_ORYSJ</name>
<evidence type="ECO:0000250" key="1"/>
<evidence type="ECO:0000255" key="2">
    <source>
        <dbReference type="PROSITE-ProRule" id="PRU00175"/>
    </source>
</evidence>
<evidence type="ECO:0000255" key="3">
    <source>
        <dbReference type="PROSITE-ProRule" id="PRU00455"/>
    </source>
</evidence>
<evidence type="ECO:0000269" key="4">
    <source>
    </source>
</evidence>
<evidence type="ECO:0000269" key="5">
    <source>
    </source>
</evidence>
<evidence type="ECO:0000303" key="6">
    <source>
    </source>
</evidence>
<evidence type="ECO:0000305" key="7"/>
<evidence type="ECO:0000305" key="8">
    <source>
    </source>
</evidence>
<evidence type="ECO:0000312" key="9">
    <source>
        <dbReference type="EMBL" id="ABF96019.1"/>
    </source>
</evidence>
<evidence type="ECO:0000312" key="10">
    <source>
        <dbReference type="EMBL" id="BAH92148.1"/>
    </source>
</evidence>
<reference key="1">
    <citation type="journal article" date="2005" name="Genome Res.">
        <title>Sequence, annotation, and analysis of synteny between rice chromosome 3 and diverged grass species.</title>
        <authorList>
            <consortium name="The rice chromosome 3 sequencing consortium"/>
            <person name="Buell C.R."/>
            <person name="Yuan Q."/>
            <person name="Ouyang S."/>
            <person name="Liu J."/>
            <person name="Zhu W."/>
            <person name="Wang A."/>
            <person name="Maiti R."/>
            <person name="Haas B."/>
            <person name="Wortman J."/>
            <person name="Pertea M."/>
            <person name="Jones K.M."/>
            <person name="Kim M."/>
            <person name="Overton L."/>
            <person name="Tsitrin T."/>
            <person name="Fadrosh D."/>
            <person name="Bera J."/>
            <person name="Weaver B."/>
            <person name="Jin S."/>
            <person name="Johri S."/>
            <person name="Reardon M."/>
            <person name="Webb K."/>
            <person name="Hill J."/>
            <person name="Moffat K."/>
            <person name="Tallon L."/>
            <person name="Van Aken S."/>
            <person name="Lewis M."/>
            <person name="Utterback T."/>
            <person name="Feldblyum T."/>
            <person name="Zismann V."/>
            <person name="Iobst S."/>
            <person name="Hsiao J."/>
            <person name="de Vazeille A.R."/>
            <person name="Salzberg S.L."/>
            <person name="White O."/>
            <person name="Fraser C.M."/>
            <person name="Yu Y."/>
            <person name="Kim H."/>
            <person name="Rambo T."/>
            <person name="Currie J."/>
            <person name="Collura K."/>
            <person name="Kernodle-Thompson S."/>
            <person name="Wei F."/>
            <person name="Kudrna K."/>
            <person name="Ammiraju J.S.S."/>
            <person name="Luo M."/>
            <person name="Goicoechea J.L."/>
            <person name="Wing R.A."/>
            <person name="Henry D."/>
            <person name="Oates R."/>
            <person name="Palmer M."/>
            <person name="Pries G."/>
            <person name="Saski C."/>
            <person name="Simmons J."/>
            <person name="Soderlund C."/>
            <person name="Nelson W."/>
            <person name="de la Bastide M."/>
            <person name="Spiegel L."/>
            <person name="Nascimento L."/>
            <person name="Huang E."/>
            <person name="Preston R."/>
            <person name="Zutavern T."/>
            <person name="Palmer L."/>
            <person name="O'Shaughnessy A."/>
            <person name="Dike S."/>
            <person name="McCombie W.R."/>
            <person name="Minx P."/>
            <person name="Cordum H."/>
            <person name="Wilson R."/>
            <person name="Jin W."/>
            <person name="Lee H.R."/>
            <person name="Jiang J."/>
            <person name="Jackson S."/>
        </authorList>
    </citation>
    <scope>NUCLEOTIDE SEQUENCE [LARGE SCALE GENOMIC DNA]</scope>
    <source>
        <strain>cv. Nipponbare</strain>
    </source>
</reference>
<reference key="2">
    <citation type="journal article" date="2005" name="Nature">
        <title>The map-based sequence of the rice genome.</title>
        <authorList>
            <consortium name="International rice genome sequencing project (IRGSP)"/>
        </authorList>
    </citation>
    <scope>NUCLEOTIDE SEQUENCE [LARGE SCALE GENOMIC DNA]</scope>
    <source>
        <strain>cv. Nipponbare</strain>
    </source>
</reference>
<reference key="3">
    <citation type="journal article" date="2008" name="Nucleic Acids Res.">
        <title>The rice annotation project database (RAP-DB): 2008 update.</title>
        <authorList>
            <consortium name="The rice annotation project (RAP)"/>
        </authorList>
    </citation>
    <scope>GENOME REANNOTATION</scope>
    <source>
        <strain>cv. Nipponbare</strain>
    </source>
</reference>
<reference key="4">
    <citation type="journal article" date="2013" name="Rice">
        <title>Improvement of the Oryza sativa Nipponbare reference genome using next generation sequence and optical map data.</title>
        <authorList>
            <person name="Kawahara Y."/>
            <person name="de la Bastide M."/>
            <person name="Hamilton J.P."/>
            <person name="Kanamori H."/>
            <person name="McCombie W.R."/>
            <person name="Ouyang S."/>
            <person name="Schwartz D.C."/>
            <person name="Tanaka T."/>
            <person name="Wu J."/>
            <person name="Zhou S."/>
            <person name="Childs K.L."/>
            <person name="Davidson R.M."/>
            <person name="Lin H."/>
            <person name="Quesada-Ocampo L."/>
            <person name="Vaillancourt B."/>
            <person name="Sakai H."/>
            <person name="Lee S.S."/>
            <person name="Kim J."/>
            <person name="Numa H."/>
            <person name="Itoh T."/>
            <person name="Buell C.R."/>
            <person name="Matsumoto T."/>
        </authorList>
    </citation>
    <scope>GENOME REANNOTATION</scope>
    <source>
        <strain>cv. Nipponbare</strain>
    </source>
</reference>
<reference key="5">
    <citation type="journal article" date="2003" name="Science">
        <title>Collection, mapping, and annotation of over 28,000 cDNA clones from japonica rice.</title>
        <authorList>
            <consortium name="The rice full-length cDNA consortium"/>
        </authorList>
    </citation>
    <scope>NUCLEOTIDE SEQUENCE [LARGE SCALE MRNA]</scope>
    <source>
        <strain>cv. Nipponbare</strain>
    </source>
</reference>
<reference key="6">
    <citation type="journal article" date="2011" name="Plant Physiol.">
        <title>The SINA E3 ligase OsDIS1 negatively regulates drought response in rice.</title>
        <authorList>
            <person name="Ning Y."/>
            <person name="Jantasuriyarat C."/>
            <person name="Zhao Q."/>
            <person name="Zhang H."/>
            <person name="Chen S."/>
            <person name="Liu J."/>
            <person name="Liu L."/>
            <person name="Tang S."/>
            <person name="Park C.H."/>
            <person name="Wang X."/>
            <person name="Liu X."/>
            <person name="Dai L."/>
            <person name="Xie Q."/>
            <person name="Wang G.L."/>
        </authorList>
    </citation>
    <scope>FUNCTION</scope>
    <scope>CATALYTIC ACTIVITY</scope>
    <scope>INTERACTION WITH NEK6</scope>
    <scope>SUBCELLULAR LOCATION</scope>
    <scope>INDUCTION BY DROUGHT STRESS</scope>
    <scope>MUTAGENESIS OF HIS-71</scope>
</reference>
<reference key="7">
    <citation type="journal article" date="2011" name="Plant Signal. Behav.">
        <title>OsDIS1-mediated stress response pathway in rice.</title>
        <authorList>
            <person name="Ning Y."/>
            <person name="Xie Q."/>
            <person name="Wang G.L."/>
        </authorList>
    </citation>
    <scope>INTERACTION WITH SKIPA</scope>
</reference>
<protein>
    <recommendedName>
        <fullName evidence="7">E3 ubiquitin-protein ligase DIS1</fullName>
        <ecNumber evidence="4">2.3.2.27</ecNumber>
    </recommendedName>
    <alternativeName>
        <fullName evidence="6">Drought-induced SINA protein 1</fullName>
        <shortName evidence="6">OsDIS1</shortName>
    </alternativeName>
    <alternativeName>
        <fullName evidence="7">RING-type E3 ubiquitin transferase DIS1</fullName>
    </alternativeName>
</protein>
<comment type="function">
    <text evidence="4 8">E3 ubiquitin-protein ligase that mediates ubiquitination and subsequent proteasomal degradation of target proteins. E3 ubiquitin ligases accept ubiquitin from an E2 ubiquitin-conjugating enzyme in the form of a thioester and then directly transfers the ubiquitin to targeted substrates (Probable). Plays a negative role in drought stress tolerance through transcriptional and post-translational regulation of diverse stress-related genes. Interacts with the serine/threonine-protein kinase NEK6 and promotes its degradation via the 26S proteasome-dependent pathway (PubMed:21719639).</text>
</comment>
<comment type="catalytic activity">
    <reaction evidence="4">
        <text>S-ubiquitinyl-[E2 ubiquitin-conjugating enzyme]-L-cysteine + [acceptor protein]-L-lysine = [E2 ubiquitin-conjugating enzyme]-L-cysteine + N(6)-ubiquitinyl-[acceptor protein]-L-lysine.</text>
        <dbReference type="EC" id="2.3.2.27"/>
    </reaction>
</comment>
<comment type="pathway">
    <text evidence="7">Protein modification; protein ubiquitination.</text>
</comment>
<comment type="subunit">
    <text evidence="4 5 7">Homodimer (Probable). Interacts with NEK6 (PubMed:21719639). Interacts with SKIPA (PubMed:22067990).</text>
</comment>
<comment type="subcellular location">
    <subcellularLocation>
        <location evidence="4">Nucleus</location>
    </subcellularLocation>
    <subcellularLocation>
        <location evidence="4">Cytoplasm</location>
    </subcellularLocation>
    <text evidence="4">Predominantly nuclear. Partially cytoplasmic.</text>
</comment>
<comment type="induction">
    <text evidence="4">Induced by drought stress.</text>
</comment>
<comment type="domain">
    <text evidence="7">The RING-type zinc finger domain is essential for ubiquitin ligase activity.</text>
</comment>
<comment type="domain">
    <text evidence="1">The SBD domain (substrate-binding domain) mediates the homodimerization and the interaction with substrate proteins. It is related to the TRAF family.</text>
</comment>
<comment type="miscellaneous">
    <text evidence="4">Plants overexpressing DIS1 exhibit reduced drought tolerance. Plants silencing DIS1 show enhanced drought tolerance.</text>
</comment>
<comment type="similarity">
    <text evidence="7">Belongs to the SINA (Seven in absentia) family.</text>
</comment>
<sequence>MASVTYIDDSGSEVIDPPKTEVLDVTELAGDPVPHSPKPNVVVSSSVRELLECPVCLSAMYPPIHQCSNGHTLCSGCKPRVHNRCPTCRHELGNIRCLALEKVAASLELPCKYQNFGCVGIYPYYCKLKHESQCQYRPYSCPYAGSECTVAGDIPYLVNHLKDDHKVDMHNGCTFNHRYVKSNPHEVENATWMLTVFSCFGQYFCLHFEAFQLGMAPVYIAFLRFMGDDLEAKNYSYSLEVGGTGRKMIWQGVPRSIRDSHRKVRDSYDGLIIQRNMALFFSGGERKELKLRVTGRIWKEQ</sequence>
<dbReference type="EC" id="2.3.2.27" evidence="4"/>
<dbReference type="EMBL" id="DP000009">
    <property type="protein sequence ID" value="ABF96019.1"/>
    <property type="molecule type" value="Genomic_DNA"/>
</dbReference>
<dbReference type="EMBL" id="AP008209">
    <property type="protein sequence ID" value="BAH92148.1"/>
    <property type="molecule type" value="Genomic_DNA"/>
</dbReference>
<dbReference type="EMBL" id="AP014959">
    <property type="protein sequence ID" value="BAS84239.1"/>
    <property type="molecule type" value="Genomic_DNA"/>
</dbReference>
<dbReference type="EMBL" id="AK058336">
    <property type="protein sequence ID" value="BAG86666.1"/>
    <property type="molecule type" value="mRNA"/>
</dbReference>
<dbReference type="RefSeq" id="XP_015628076.1">
    <property type="nucleotide sequence ID" value="XM_015772590.1"/>
</dbReference>
<dbReference type="SMR" id="Q10L91"/>
<dbReference type="FunCoup" id="Q10L91">
    <property type="interactions" value="820"/>
</dbReference>
<dbReference type="STRING" id="39947.Q10L91"/>
<dbReference type="PaxDb" id="39947-Q10L91"/>
<dbReference type="EnsemblPlants" id="Os03t0356414-01">
    <property type="protein sequence ID" value="Os03t0356414-01"/>
    <property type="gene ID" value="Os03g0356414"/>
</dbReference>
<dbReference type="Gramene" id="Os03t0356414-01">
    <property type="protein sequence ID" value="Os03t0356414-01"/>
    <property type="gene ID" value="Os03g0356414"/>
</dbReference>
<dbReference type="KEGG" id="dosa:Os03g0356414"/>
<dbReference type="KEGG" id="osa:9266295"/>
<dbReference type="eggNOG" id="KOG3002">
    <property type="taxonomic scope" value="Eukaryota"/>
</dbReference>
<dbReference type="HOGENOM" id="CLU_028215_1_0_1"/>
<dbReference type="InParanoid" id="Q10L91"/>
<dbReference type="OMA" id="MLEISEH"/>
<dbReference type="OrthoDB" id="941555at2759"/>
<dbReference type="UniPathway" id="UPA00143"/>
<dbReference type="Proteomes" id="UP000000763">
    <property type="component" value="Chromosome 3"/>
</dbReference>
<dbReference type="Proteomes" id="UP000059680">
    <property type="component" value="Chromosome 3"/>
</dbReference>
<dbReference type="GO" id="GO:0005737">
    <property type="term" value="C:cytoplasm"/>
    <property type="evidence" value="ECO:0000314"/>
    <property type="project" value="UniProtKB"/>
</dbReference>
<dbReference type="GO" id="GO:0005634">
    <property type="term" value="C:nucleus"/>
    <property type="evidence" value="ECO:0000314"/>
    <property type="project" value="UniProtKB"/>
</dbReference>
<dbReference type="GO" id="GO:0061630">
    <property type="term" value="F:ubiquitin protein ligase activity"/>
    <property type="evidence" value="ECO:0000314"/>
    <property type="project" value="UniProtKB"/>
</dbReference>
<dbReference type="GO" id="GO:0008270">
    <property type="term" value="F:zinc ion binding"/>
    <property type="evidence" value="ECO:0007669"/>
    <property type="project" value="UniProtKB-KW"/>
</dbReference>
<dbReference type="GO" id="GO:0080148">
    <property type="term" value="P:negative regulation of response to water deprivation"/>
    <property type="evidence" value="ECO:0000315"/>
    <property type="project" value="UniProtKB"/>
</dbReference>
<dbReference type="GO" id="GO:0016567">
    <property type="term" value="P:protein ubiquitination"/>
    <property type="evidence" value="ECO:0007669"/>
    <property type="project" value="UniProtKB-UniPathway"/>
</dbReference>
<dbReference type="GO" id="GO:0006511">
    <property type="term" value="P:ubiquitin-dependent protein catabolic process"/>
    <property type="evidence" value="ECO:0007669"/>
    <property type="project" value="InterPro"/>
</dbReference>
<dbReference type="CDD" id="cd16571">
    <property type="entry name" value="RING-HC_SIAHs"/>
    <property type="match status" value="1"/>
</dbReference>
<dbReference type="CDD" id="cd03829">
    <property type="entry name" value="Sina"/>
    <property type="match status" value="1"/>
</dbReference>
<dbReference type="FunFam" id="3.30.40.10:FF:000041">
    <property type="entry name" value="E3 ubiquitin-protein ligase SINAT3"/>
    <property type="match status" value="1"/>
</dbReference>
<dbReference type="FunFam" id="2.60.210.10:FF:000004">
    <property type="entry name" value="E3 ubiquitin-protein ligase SINAT5-like"/>
    <property type="match status" value="1"/>
</dbReference>
<dbReference type="FunFam" id="3.30.40.10:FF:000311">
    <property type="entry name" value="E3 ubiquitin-protein ligase SINAT5-like"/>
    <property type="match status" value="1"/>
</dbReference>
<dbReference type="Gene3D" id="2.60.210.10">
    <property type="entry name" value="Apoptosis, Tumor Necrosis Factor Receptor Associated Protein 2, Chain A"/>
    <property type="match status" value="1"/>
</dbReference>
<dbReference type="Gene3D" id="3.30.40.10">
    <property type="entry name" value="Zinc/RING finger domain, C3HC4 (zinc finger)"/>
    <property type="match status" value="2"/>
</dbReference>
<dbReference type="InterPro" id="IPR018121">
    <property type="entry name" value="7-in-absentia-prot_TRAF-dom"/>
</dbReference>
<dbReference type="InterPro" id="IPR052088">
    <property type="entry name" value="E3_ubiquitin-ligase_SINA"/>
</dbReference>
<dbReference type="InterPro" id="IPR049548">
    <property type="entry name" value="Sina-like_RING"/>
</dbReference>
<dbReference type="InterPro" id="IPR008974">
    <property type="entry name" value="TRAF-like"/>
</dbReference>
<dbReference type="InterPro" id="IPR001841">
    <property type="entry name" value="Znf_RING"/>
</dbReference>
<dbReference type="InterPro" id="IPR013083">
    <property type="entry name" value="Znf_RING/FYVE/PHD"/>
</dbReference>
<dbReference type="InterPro" id="IPR013010">
    <property type="entry name" value="Znf_SIAH"/>
</dbReference>
<dbReference type="PANTHER" id="PTHR10315">
    <property type="entry name" value="E3 UBIQUITIN PROTEIN LIGASE SIAH"/>
    <property type="match status" value="1"/>
</dbReference>
<dbReference type="PANTHER" id="PTHR10315:SF111">
    <property type="entry name" value="E3 UBIQUITIN-PROTEIN LIGASE DIS1"/>
    <property type="match status" value="1"/>
</dbReference>
<dbReference type="Pfam" id="PF21362">
    <property type="entry name" value="Sina_RING"/>
    <property type="match status" value="1"/>
</dbReference>
<dbReference type="Pfam" id="PF03145">
    <property type="entry name" value="Sina_TRAF"/>
    <property type="match status" value="1"/>
</dbReference>
<dbReference type="Pfam" id="PF21361">
    <property type="entry name" value="Sina_ZnF"/>
    <property type="match status" value="1"/>
</dbReference>
<dbReference type="SUPFAM" id="SSF57850">
    <property type="entry name" value="RING/U-box"/>
    <property type="match status" value="1"/>
</dbReference>
<dbReference type="SUPFAM" id="SSF49599">
    <property type="entry name" value="TRAF domain-like"/>
    <property type="match status" value="1"/>
</dbReference>
<dbReference type="PROSITE" id="PS50089">
    <property type="entry name" value="ZF_RING_2"/>
    <property type="match status" value="1"/>
</dbReference>
<dbReference type="PROSITE" id="PS51081">
    <property type="entry name" value="ZF_SIAH"/>
    <property type="match status" value="1"/>
</dbReference>